<gene>
    <name type="ORF">SPBC1683.06c</name>
</gene>
<protein>
    <recommendedName>
        <fullName>Uncharacterized protein C1683.06c</fullName>
    </recommendedName>
</protein>
<feature type="chain" id="PRO_0000316595" description="Uncharacterized protein C1683.06c">
    <location>
        <begin position="1"/>
        <end position="310"/>
    </location>
</feature>
<feature type="active site" evidence="1">
    <location>
        <position position="239"/>
    </location>
</feature>
<comment type="subcellular location">
    <subcellularLocation>
        <location evidence="2">Cytoplasm</location>
    </subcellularLocation>
    <subcellularLocation>
        <location evidence="2">Nucleus</location>
    </subcellularLocation>
</comment>
<comment type="similarity">
    <text evidence="3">Belongs to the IUNH family.</text>
</comment>
<keyword id="KW-0963">Cytoplasm</keyword>
<keyword id="KW-0326">Glycosidase</keyword>
<keyword id="KW-0378">Hydrolase</keyword>
<keyword id="KW-0539">Nucleus</keyword>
<keyword id="KW-1185">Reference proteome</keyword>
<organism>
    <name type="scientific">Schizosaccharomyces pombe (strain 972 / ATCC 24843)</name>
    <name type="common">Fission yeast</name>
    <dbReference type="NCBI Taxonomy" id="284812"/>
    <lineage>
        <taxon>Eukaryota</taxon>
        <taxon>Fungi</taxon>
        <taxon>Dikarya</taxon>
        <taxon>Ascomycota</taxon>
        <taxon>Taphrinomycotina</taxon>
        <taxon>Schizosaccharomycetes</taxon>
        <taxon>Schizosaccharomycetales</taxon>
        <taxon>Schizosaccharomycetaceae</taxon>
        <taxon>Schizosaccharomyces</taxon>
    </lineage>
</organism>
<sequence length="310" mass="33667">MKIIIDTDPGQDDAITALLAIASPEIELLGVTTVAGNVPVSMTTRNALQMLDLAGRPDIPVYAGSNKPLLRAPITATHVHGASGFEGAVLPPPSRKENEGHAVDFIIDTLRNNEPGTITICTIGPLTNIALALNKAPEVIQRAKQIVMMAGAFSEVGNITPAAEFNIYVDPHAAQMVLSSGIPIVMMPLDITHQLHTSAKRIARMEALPNRVGPVVAAWLRMEKAYEAKKYGTDGGPLHDPNTVMWLLRPDIYSGRKVNVQIETQSELTMGMSVVDWWQVGLLPANVTFLRTVDDDEFYEVLIERLGRLP</sequence>
<name>YHD6_SCHPO</name>
<dbReference type="EMBL" id="CU329671">
    <property type="protein sequence ID" value="CAB91168.1"/>
    <property type="molecule type" value="Genomic_DNA"/>
</dbReference>
<dbReference type="SMR" id="Q9P6J4"/>
<dbReference type="BioGRID" id="276703">
    <property type="interactions" value="13"/>
</dbReference>
<dbReference type="FunCoup" id="Q9P6J4">
    <property type="interactions" value="405"/>
</dbReference>
<dbReference type="STRING" id="284812.Q9P6J4"/>
<dbReference type="iPTMnet" id="Q9P6J4"/>
<dbReference type="PaxDb" id="4896-SPBC1683.06c.1"/>
<dbReference type="EnsemblFungi" id="SPBC1683.06c.1">
    <property type="protein sequence ID" value="SPBC1683.06c.1:pep"/>
    <property type="gene ID" value="SPBC1683.06c"/>
</dbReference>
<dbReference type="KEGG" id="spo:2540168"/>
<dbReference type="PomBase" id="SPBC1683.06c"/>
<dbReference type="VEuPathDB" id="FungiDB:SPBC1683.06c"/>
<dbReference type="eggNOG" id="KOG2938">
    <property type="taxonomic scope" value="Eukaryota"/>
</dbReference>
<dbReference type="HOGENOM" id="CLU_036838_2_0_1"/>
<dbReference type="InParanoid" id="Q9P6J4"/>
<dbReference type="OMA" id="PNIKPFC"/>
<dbReference type="PhylomeDB" id="Q9P6J4"/>
<dbReference type="PRO" id="PR:Q9P6J4"/>
<dbReference type="Proteomes" id="UP000002485">
    <property type="component" value="Chromosome II"/>
</dbReference>
<dbReference type="GO" id="GO:0005829">
    <property type="term" value="C:cytosol"/>
    <property type="evidence" value="ECO:0007005"/>
    <property type="project" value="PomBase"/>
</dbReference>
<dbReference type="GO" id="GO:0005634">
    <property type="term" value="C:nucleus"/>
    <property type="evidence" value="ECO:0007005"/>
    <property type="project" value="PomBase"/>
</dbReference>
<dbReference type="GO" id="GO:0070635">
    <property type="term" value="F:nicotinamide riboside hydrolase activity"/>
    <property type="evidence" value="ECO:0000266"/>
    <property type="project" value="PomBase"/>
</dbReference>
<dbReference type="GO" id="GO:0070636">
    <property type="term" value="F:nicotinic acid riboside hydrolase activity"/>
    <property type="evidence" value="ECO:0000266"/>
    <property type="project" value="PomBase"/>
</dbReference>
<dbReference type="GO" id="GO:0008477">
    <property type="term" value="F:purine nucleosidase activity"/>
    <property type="evidence" value="ECO:0000318"/>
    <property type="project" value="GO_Central"/>
</dbReference>
<dbReference type="GO" id="GO:0045437">
    <property type="term" value="F:uridine nucleosidase activity"/>
    <property type="evidence" value="ECO:0000266"/>
    <property type="project" value="PomBase"/>
</dbReference>
<dbReference type="GO" id="GO:0019358">
    <property type="term" value="P:nicotinate nucleotide salvage"/>
    <property type="evidence" value="ECO:0000266"/>
    <property type="project" value="PomBase"/>
</dbReference>
<dbReference type="GO" id="GO:0006152">
    <property type="term" value="P:purine nucleoside catabolic process"/>
    <property type="evidence" value="ECO:0000318"/>
    <property type="project" value="GO_Central"/>
</dbReference>
<dbReference type="GO" id="GO:0046135">
    <property type="term" value="P:pyrimidine nucleoside catabolic process"/>
    <property type="evidence" value="ECO:0000266"/>
    <property type="project" value="PomBase"/>
</dbReference>
<dbReference type="GO" id="GO:0008655">
    <property type="term" value="P:pyrimidine-containing compound salvage"/>
    <property type="evidence" value="ECO:0000266"/>
    <property type="project" value="PomBase"/>
</dbReference>
<dbReference type="CDD" id="cd02651">
    <property type="entry name" value="nuc_hydro_IU_UC_XIUA"/>
    <property type="match status" value="1"/>
</dbReference>
<dbReference type="FunFam" id="3.90.245.10:FF:000001">
    <property type="entry name" value="Pyrimidine-specific ribonucleoside hydrolase RihA"/>
    <property type="match status" value="1"/>
</dbReference>
<dbReference type="Gene3D" id="3.90.245.10">
    <property type="entry name" value="Ribonucleoside hydrolase-like"/>
    <property type="match status" value="1"/>
</dbReference>
<dbReference type="InterPro" id="IPR001910">
    <property type="entry name" value="Inosine/uridine_hydrolase_dom"/>
</dbReference>
<dbReference type="InterPro" id="IPR023186">
    <property type="entry name" value="IUNH"/>
</dbReference>
<dbReference type="InterPro" id="IPR036452">
    <property type="entry name" value="Ribo_hydro-like"/>
</dbReference>
<dbReference type="PANTHER" id="PTHR12304">
    <property type="entry name" value="INOSINE-URIDINE PREFERRING NUCLEOSIDE HYDROLASE"/>
    <property type="match status" value="1"/>
</dbReference>
<dbReference type="PANTHER" id="PTHR12304:SF4">
    <property type="entry name" value="URIDINE NUCLEOSIDASE"/>
    <property type="match status" value="1"/>
</dbReference>
<dbReference type="Pfam" id="PF01156">
    <property type="entry name" value="IU_nuc_hydro"/>
    <property type="match status" value="1"/>
</dbReference>
<dbReference type="SUPFAM" id="SSF53590">
    <property type="entry name" value="Nucleoside hydrolase"/>
    <property type="match status" value="1"/>
</dbReference>
<evidence type="ECO:0000250" key="1"/>
<evidence type="ECO:0000269" key="2">
    <source>
    </source>
</evidence>
<evidence type="ECO:0000305" key="3"/>
<accession>Q9P6J4</accession>
<proteinExistence type="inferred from homology"/>
<reference key="1">
    <citation type="journal article" date="2002" name="Nature">
        <title>The genome sequence of Schizosaccharomyces pombe.</title>
        <authorList>
            <person name="Wood V."/>
            <person name="Gwilliam R."/>
            <person name="Rajandream M.A."/>
            <person name="Lyne M.H."/>
            <person name="Lyne R."/>
            <person name="Stewart A."/>
            <person name="Sgouros J.G."/>
            <person name="Peat N."/>
            <person name="Hayles J."/>
            <person name="Baker S.G."/>
            <person name="Basham D."/>
            <person name="Bowman S."/>
            <person name="Brooks K."/>
            <person name="Brown D."/>
            <person name="Brown S."/>
            <person name="Chillingworth T."/>
            <person name="Churcher C.M."/>
            <person name="Collins M."/>
            <person name="Connor R."/>
            <person name="Cronin A."/>
            <person name="Davis P."/>
            <person name="Feltwell T."/>
            <person name="Fraser A."/>
            <person name="Gentles S."/>
            <person name="Goble A."/>
            <person name="Hamlin N."/>
            <person name="Harris D.E."/>
            <person name="Hidalgo J."/>
            <person name="Hodgson G."/>
            <person name="Holroyd S."/>
            <person name="Hornsby T."/>
            <person name="Howarth S."/>
            <person name="Huckle E.J."/>
            <person name="Hunt S."/>
            <person name="Jagels K."/>
            <person name="James K.D."/>
            <person name="Jones L."/>
            <person name="Jones M."/>
            <person name="Leather S."/>
            <person name="McDonald S."/>
            <person name="McLean J."/>
            <person name="Mooney P."/>
            <person name="Moule S."/>
            <person name="Mungall K.L."/>
            <person name="Murphy L.D."/>
            <person name="Niblett D."/>
            <person name="Odell C."/>
            <person name="Oliver K."/>
            <person name="O'Neil S."/>
            <person name="Pearson D."/>
            <person name="Quail M.A."/>
            <person name="Rabbinowitsch E."/>
            <person name="Rutherford K.M."/>
            <person name="Rutter S."/>
            <person name="Saunders D."/>
            <person name="Seeger K."/>
            <person name="Sharp S."/>
            <person name="Skelton J."/>
            <person name="Simmonds M.N."/>
            <person name="Squares R."/>
            <person name="Squares S."/>
            <person name="Stevens K."/>
            <person name="Taylor K."/>
            <person name="Taylor R.G."/>
            <person name="Tivey A."/>
            <person name="Walsh S.V."/>
            <person name="Warren T."/>
            <person name="Whitehead S."/>
            <person name="Woodward J.R."/>
            <person name="Volckaert G."/>
            <person name="Aert R."/>
            <person name="Robben J."/>
            <person name="Grymonprez B."/>
            <person name="Weltjens I."/>
            <person name="Vanstreels E."/>
            <person name="Rieger M."/>
            <person name="Schaefer M."/>
            <person name="Mueller-Auer S."/>
            <person name="Gabel C."/>
            <person name="Fuchs M."/>
            <person name="Duesterhoeft A."/>
            <person name="Fritzc C."/>
            <person name="Holzer E."/>
            <person name="Moestl D."/>
            <person name="Hilbert H."/>
            <person name="Borzym K."/>
            <person name="Langer I."/>
            <person name="Beck A."/>
            <person name="Lehrach H."/>
            <person name="Reinhardt R."/>
            <person name="Pohl T.M."/>
            <person name="Eger P."/>
            <person name="Zimmermann W."/>
            <person name="Wedler H."/>
            <person name="Wambutt R."/>
            <person name="Purnelle B."/>
            <person name="Goffeau A."/>
            <person name="Cadieu E."/>
            <person name="Dreano S."/>
            <person name="Gloux S."/>
            <person name="Lelaure V."/>
            <person name="Mottier S."/>
            <person name="Galibert F."/>
            <person name="Aves S.J."/>
            <person name="Xiang Z."/>
            <person name="Hunt C."/>
            <person name="Moore K."/>
            <person name="Hurst S.M."/>
            <person name="Lucas M."/>
            <person name="Rochet M."/>
            <person name="Gaillardin C."/>
            <person name="Tallada V.A."/>
            <person name="Garzon A."/>
            <person name="Thode G."/>
            <person name="Daga R.R."/>
            <person name="Cruzado L."/>
            <person name="Jimenez J."/>
            <person name="Sanchez M."/>
            <person name="del Rey F."/>
            <person name="Benito J."/>
            <person name="Dominguez A."/>
            <person name="Revuelta J.L."/>
            <person name="Moreno S."/>
            <person name="Armstrong J."/>
            <person name="Forsburg S.L."/>
            <person name="Cerutti L."/>
            <person name="Lowe T."/>
            <person name="McCombie W.R."/>
            <person name="Paulsen I."/>
            <person name="Potashkin J."/>
            <person name="Shpakovski G.V."/>
            <person name="Ussery D."/>
            <person name="Barrell B.G."/>
            <person name="Nurse P."/>
        </authorList>
    </citation>
    <scope>NUCLEOTIDE SEQUENCE [LARGE SCALE GENOMIC DNA]</scope>
    <source>
        <strain>972 / ATCC 24843</strain>
    </source>
</reference>
<reference key="2">
    <citation type="journal article" date="2006" name="Nat. Biotechnol.">
        <title>ORFeome cloning and global analysis of protein localization in the fission yeast Schizosaccharomyces pombe.</title>
        <authorList>
            <person name="Matsuyama A."/>
            <person name="Arai R."/>
            <person name="Yashiroda Y."/>
            <person name="Shirai A."/>
            <person name="Kamata A."/>
            <person name="Sekido S."/>
            <person name="Kobayashi Y."/>
            <person name="Hashimoto A."/>
            <person name="Hamamoto M."/>
            <person name="Hiraoka Y."/>
            <person name="Horinouchi S."/>
            <person name="Yoshida M."/>
        </authorList>
    </citation>
    <scope>SUBCELLULAR LOCATION [LARGE SCALE ANALYSIS]</scope>
</reference>